<gene>
    <name evidence="2" type="primary">hsaA</name>
    <name type="ordered locus">MT3675</name>
</gene>
<feature type="chain" id="PRO_0000427866" description="Flavin-dependent monooxygenase, oxygenase subunit HsaA">
    <location>
        <begin position="1"/>
        <end position="394"/>
    </location>
</feature>
<feature type="binding site" evidence="1">
    <location>
        <position position="84"/>
    </location>
    <ligand>
        <name>FMN</name>
        <dbReference type="ChEBI" id="CHEBI:58210"/>
    </ligand>
</feature>
<feature type="binding site" evidence="1">
    <location>
        <begin position="118"/>
        <end position="120"/>
    </location>
    <ligand>
        <name>FMN</name>
        <dbReference type="ChEBI" id="CHEBI:58210"/>
    </ligand>
</feature>
<feature type="binding site" evidence="1">
    <location>
        <begin position="141"/>
        <end position="143"/>
    </location>
    <ligand>
        <name>FMN</name>
        <dbReference type="ChEBI" id="CHEBI:58210"/>
    </ligand>
</feature>
<feature type="binding site" evidence="1">
    <location>
        <position position="263"/>
    </location>
    <ligand>
        <name>FMN</name>
        <dbReference type="ChEBI" id="CHEBI:58210"/>
    </ligand>
</feature>
<feature type="binding site" evidence="1">
    <location>
        <begin position="346"/>
        <end position="347"/>
    </location>
    <ligand>
        <name>FMN</name>
        <dbReference type="ChEBI" id="CHEBI:58210"/>
    </ligand>
</feature>
<feature type="binding site" evidence="1">
    <location>
        <begin position="368"/>
        <end position="369"/>
    </location>
    <ligand>
        <name>FMN</name>
        <dbReference type="ChEBI" id="CHEBI:58210"/>
    </ligand>
</feature>
<dbReference type="EC" id="1.14.14.12" evidence="2"/>
<dbReference type="EMBL" id="AE000516">
    <property type="protein sequence ID" value="AAK48034.1"/>
    <property type="molecule type" value="Genomic_DNA"/>
</dbReference>
<dbReference type="PIR" id="H70605">
    <property type="entry name" value="H70605"/>
</dbReference>
<dbReference type="RefSeq" id="WP_003900101.1">
    <property type="nucleotide sequence ID" value="NZ_KK341227.1"/>
</dbReference>
<dbReference type="SMR" id="P9WJA0"/>
<dbReference type="KEGG" id="mtc:MT3675"/>
<dbReference type="PATRIC" id="fig|83331.31.peg.3957"/>
<dbReference type="HOGENOM" id="CLU_018204_2_0_11"/>
<dbReference type="UniPathway" id="UPA00062"/>
<dbReference type="Proteomes" id="UP000001020">
    <property type="component" value="Chromosome"/>
</dbReference>
<dbReference type="GO" id="GO:0005737">
    <property type="term" value="C:cytoplasm"/>
    <property type="evidence" value="ECO:0007669"/>
    <property type="project" value="TreeGrafter"/>
</dbReference>
<dbReference type="GO" id="GO:0036383">
    <property type="term" value="F:3-hydroxy-9,10-secoandrosta-1,3,5(10)-triene-9,17-dione monooxygenase activity"/>
    <property type="evidence" value="ECO:0007669"/>
    <property type="project" value="UniProtKB-EC"/>
</dbReference>
<dbReference type="GO" id="GO:0003995">
    <property type="term" value="F:acyl-CoA dehydrogenase activity"/>
    <property type="evidence" value="ECO:0007669"/>
    <property type="project" value="TreeGrafter"/>
</dbReference>
<dbReference type="GO" id="GO:0050660">
    <property type="term" value="F:flavin adenine dinucleotide binding"/>
    <property type="evidence" value="ECO:0007669"/>
    <property type="project" value="InterPro"/>
</dbReference>
<dbReference type="GO" id="GO:0033539">
    <property type="term" value="P:fatty acid beta-oxidation using acyl-CoA dehydrogenase"/>
    <property type="evidence" value="ECO:0007669"/>
    <property type="project" value="TreeGrafter"/>
</dbReference>
<dbReference type="GO" id="GO:0006694">
    <property type="term" value="P:steroid biosynthetic process"/>
    <property type="evidence" value="ECO:0007669"/>
    <property type="project" value="UniProtKB-UniPathway"/>
</dbReference>
<dbReference type="CDD" id="cd01159">
    <property type="entry name" value="NcnH"/>
    <property type="match status" value="1"/>
</dbReference>
<dbReference type="FunFam" id="1.20.140.10:FF:000024">
    <property type="entry name" value="Flavin-dependent monooxygenase"/>
    <property type="match status" value="1"/>
</dbReference>
<dbReference type="FunFam" id="2.40.110.10:FF:000021">
    <property type="entry name" value="Flavin-dependent monooxygenase, oxygenase subunit"/>
    <property type="match status" value="1"/>
</dbReference>
<dbReference type="FunFam" id="1.10.540.10:FF:000062">
    <property type="entry name" value="Flavin-dependent monooxygenase, oxygenase subunit HsaA"/>
    <property type="match status" value="1"/>
</dbReference>
<dbReference type="Gene3D" id="1.10.540.10">
    <property type="entry name" value="Acyl-CoA dehydrogenase/oxidase, N-terminal domain"/>
    <property type="match status" value="1"/>
</dbReference>
<dbReference type="Gene3D" id="2.40.110.10">
    <property type="entry name" value="Butyryl-CoA Dehydrogenase, subunit A, domain 2"/>
    <property type="match status" value="1"/>
</dbReference>
<dbReference type="Gene3D" id="1.20.140.10">
    <property type="entry name" value="Butyryl-CoA Dehydrogenase, subunit A, domain 3"/>
    <property type="match status" value="1"/>
</dbReference>
<dbReference type="InterPro" id="IPR050741">
    <property type="entry name" value="Acyl-CoA_dehydrogenase"/>
</dbReference>
<dbReference type="InterPro" id="IPR013107">
    <property type="entry name" value="Acyl-CoA_DH_C"/>
</dbReference>
<dbReference type="InterPro" id="IPR046373">
    <property type="entry name" value="Acyl-CoA_Oxase/DH_mid-dom_sf"/>
</dbReference>
<dbReference type="InterPro" id="IPR036250">
    <property type="entry name" value="AcylCo_DH-like_C"/>
</dbReference>
<dbReference type="InterPro" id="IPR013786">
    <property type="entry name" value="AcylCoA_DH/ox_N"/>
</dbReference>
<dbReference type="InterPro" id="IPR037069">
    <property type="entry name" value="AcylCoA_DH/ox_N_sf"/>
</dbReference>
<dbReference type="InterPro" id="IPR009100">
    <property type="entry name" value="AcylCoA_DH/oxidase_NM_dom_sf"/>
</dbReference>
<dbReference type="InterPro" id="IPR054617">
    <property type="entry name" value="HsaA"/>
</dbReference>
<dbReference type="NCBIfam" id="NF045629">
    <property type="entry name" value="monooxsub_HsaA"/>
    <property type="match status" value="1"/>
</dbReference>
<dbReference type="PANTHER" id="PTHR48083:SF19">
    <property type="entry name" value="FLAVIN-DEPENDENT MONOOXYGENASE, OXYGENASE SUBUNIT HSAA"/>
    <property type="match status" value="1"/>
</dbReference>
<dbReference type="PANTHER" id="PTHR48083">
    <property type="entry name" value="MEDIUM-CHAIN SPECIFIC ACYL-COA DEHYDROGENASE, MITOCHONDRIAL-RELATED"/>
    <property type="match status" value="1"/>
</dbReference>
<dbReference type="Pfam" id="PF08028">
    <property type="entry name" value="Acyl-CoA_dh_2"/>
    <property type="match status" value="1"/>
</dbReference>
<dbReference type="Pfam" id="PF02771">
    <property type="entry name" value="Acyl-CoA_dh_N"/>
    <property type="match status" value="1"/>
</dbReference>
<dbReference type="PIRSF" id="PIRSF016578">
    <property type="entry name" value="HsaA"/>
    <property type="match status" value="1"/>
</dbReference>
<dbReference type="SUPFAM" id="SSF47203">
    <property type="entry name" value="Acyl-CoA dehydrogenase C-terminal domain-like"/>
    <property type="match status" value="1"/>
</dbReference>
<dbReference type="SUPFAM" id="SSF56645">
    <property type="entry name" value="Acyl-CoA dehydrogenase NM domain-like"/>
    <property type="match status" value="1"/>
</dbReference>
<reference key="1">
    <citation type="journal article" date="2002" name="J. Bacteriol.">
        <title>Whole-genome comparison of Mycobacterium tuberculosis clinical and laboratory strains.</title>
        <authorList>
            <person name="Fleischmann R.D."/>
            <person name="Alland D."/>
            <person name="Eisen J.A."/>
            <person name="Carpenter L."/>
            <person name="White O."/>
            <person name="Peterson J.D."/>
            <person name="DeBoy R.T."/>
            <person name="Dodson R.J."/>
            <person name="Gwinn M.L."/>
            <person name="Haft D.H."/>
            <person name="Hickey E.K."/>
            <person name="Kolonay J.F."/>
            <person name="Nelson W.C."/>
            <person name="Umayam L.A."/>
            <person name="Ermolaeva M.D."/>
            <person name="Salzberg S.L."/>
            <person name="Delcher A."/>
            <person name="Utterback T.R."/>
            <person name="Weidman J.F."/>
            <person name="Khouri H.M."/>
            <person name="Gill J."/>
            <person name="Mikula A."/>
            <person name="Bishai W."/>
            <person name="Jacobs W.R. Jr."/>
            <person name="Venter J.C."/>
            <person name="Fraser C.M."/>
        </authorList>
    </citation>
    <scope>NUCLEOTIDE SEQUENCE [LARGE SCALE GENOMIC DNA]</scope>
    <source>
        <strain>CDC 1551 / Oshkosh</strain>
    </source>
</reference>
<keyword id="KW-0058">Aromatic hydrocarbons catabolism</keyword>
<keyword id="KW-0274">FAD</keyword>
<keyword id="KW-0285">Flavoprotein</keyword>
<keyword id="KW-0288">FMN</keyword>
<keyword id="KW-0442">Lipid degradation</keyword>
<keyword id="KW-0443">Lipid metabolism</keyword>
<keyword id="KW-0503">Monooxygenase</keyword>
<keyword id="KW-0560">Oxidoreductase</keyword>
<keyword id="KW-1185">Reference proteome</keyword>
<keyword id="KW-0753">Steroid metabolism</keyword>
<protein>
    <recommendedName>
        <fullName evidence="2">Flavin-dependent monooxygenase, oxygenase subunit HsaA</fullName>
        <ecNumber evidence="2">1.14.14.12</ecNumber>
    </recommendedName>
    <alternativeName>
        <fullName evidence="2">3-hydroxy-9,10-secoandrosta-1,3,5(10)-triene-9,17-dione 4-hydroxylase, oxygenase subunit</fullName>
    </alternativeName>
    <alternativeName>
        <fullName evidence="2">3-hydroxy-9,10-secoandrosta-1,3,5(10)-triene-9,17-dione monooxygenase</fullName>
    </alternativeName>
</protein>
<proteinExistence type="inferred from homology"/>
<comment type="function">
    <text evidence="2">Catalyzes the o-hydroxylation of 3-hydroxy-9,10-secoandrosta-1,3,5(10)-triene-9,17-dione (3-HSA) to 3,4-dihydroxy-9,10-secoandrosta-1,3,5(10)-triene-9,17-dione (3,4-DHSA) in the catabolism of cholesterol.</text>
</comment>
<comment type="catalytic activity">
    <reaction evidence="2">
        <text>3-hydroxy-9,10-secoandrosta-1,3,5(10)-triene-9,17-dione + FMNH2 + O2 = 3,4-dihydroxy-9,10-secoandrosta-1,3,5(10)-triene-9,17-dione + FMN + H2O + H(+)</text>
        <dbReference type="Rhea" id="RHEA:31731"/>
        <dbReference type="ChEBI" id="CHEBI:15377"/>
        <dbReference type="ChEBI" id="CHEBI:15378"/>
        <dbReference type="ChEBI" id="CHEBI:15379"/>
        <dbReference type="ChEBI" id="CHEBI:15896"/>
        <dbReference type="ChEBI" id="CHEBI:57618"/>
        <dbReference type="ChEBI" id="CHEBI:58210"/>
        <dbReference type="ChEBI" id="CHEBI:63245"/>
        <dbReference type="EC" id="1.14.14.12"/>
    </reaction>
    <physiologicalReaction direction="left-to-right" evidence="2">
        <dbReference type="Rhea" id="RHEA:31732"/>
    </physiologicalReaction>
</comment>
<comment type="pathway">
    <text evidence="2">Lipid metabolism; steroid biosynthesis.</text>
</comment>
<comment type="subunit">
    <text evidence="2">Homotetramer under anaerobic conditions. HsaAB monooxygenase consists of an oxygenase component HsaA and a reductase component HsaB.</text>
</comment>
<comment type="similarity">
    <text evidence="3">Belongs to the HpaH/HsaA monooxygenase family.</text>
</comment>
<evidence type="ECO:0000250" key="1"/>
<evidence type="ECO:0000250" key="2">
    <source>
        <dbReference type="UniProtKB" id="P9WJA1"/>
    </source>
</evidence>
<evidence type="ECO:0000305" key="3"/>
<name>HSAA_MYCTO</name>
<organism>
    <name type="scientific">Mycobacterium tuberculosis (strain CDC 1551 / Oshkosh)</name>
    <dbReference type="NCBI Taxonomy" id="83331"/>
    <lineage>
        <taxon>Bacteria</taxon>
        <taxon>Bacillati</taxon>
        <taxon>Actinomycetota</taxon>
        <taxon>Actinomycetes</taxon>
        <taxon>Mycobacteriales</taxon>
        <taxon>Mycobacteriaceae</taxon>
        <taxon>Mycobacterium</taxon>
        <taxon>Mycobacterium tuberculosis complex</taxon>
    </lineage>
</organism>
<accession>P9WJA0</accession>
<accession>L0TCY6</accession>
<accession>P96852</accession>
<accession>Q7D595</accession>
<sequence>MTSIQQRDAQSVLAAIDNLLPEIRDRAQATEDLRRLPDETVKALDDVGFFTLLQPQQWGGLQCDPALFFEATRRLASVCGSTGWVSSIVGVHNWHLALFDQRAQEEVWGEDPSTRISSSYAPMGAGVVVDGGYLVNGSWNWSSGCDHASWTFVGGPVIKDGRPVDFGSFLIPRSEYEIKDVWYVVGLRGTGSNTLVVKDVFVPRHRFLSYKAMNDHTAGGLATNSAPVYKMPWGTMHPTTISAPIVGMAYGAYAAHVEHQGKRVRAAFAGEKAKDDPFAKVRIAEAASDIDAAWRQLIGNVSDEYALLAAGKEIPFELRARARRDQVRATGRSIASIDRLFEASGATALSNEAPIQRFWRDAHAGRVHAANDPERAYVIFGNHEFGLPPGDTMV</sequence>